<keyword id="KW-0002">3D-structure</keyword>
<keyword id="KW-0274">FAD</keyword>
<keyword id="KW-0285">Flavoprotein</keyword>
<keyword id="KW-0456">Lyase</keyword>
<accession>Q9RC23</accession>
<comment type="function">
    <text evidence="1">Catalyzes the oxidative decarboxylation of the C-terminal cysteine residue of mersacidin to an aminoenethiol residue.</text>
</comment>
<comment type="cofactor">
    <cofactor evidence="1">
        <name>FAD</name>
        <dbReference type="ChEBI" id="CHEBI:57692"/>
    </cofactor>
    <text evidence="1">Binds 1 FAD per subunit.</text>
</comment>
<comment type="pathway">
    <text>Antibiotic biosynthesis; mersacidin biosynthesis.</text>
</comment>
<comment type="subunit">
    <text evidence="2">Homododecamer.</text>
</comment>
<comment type="similarity">
    <text evidence="3">Belongs to the HFCD (homooligomeric flavin containing Cys decarboxylase) superfamily.</text>
</comment>
<organism evidence="3">
    <name type="scientific">Bacillus sp. (strain HIL-Y85/54728)</name>
    <dbReference type="NCBI Taxonomy" id="69002"/>
    <lineage>
        <taxon>Bacteria</taxon>
        <taxon>Bacillati</taxon>
        <taxon>Bacillota</taxon>
        <taxon>Bacilli</taxon>
        <taxon>Bacillales</taxon>
        <taxon>Bacillaceae</taxon>
        <taxon>Bacillus</taxon>
    </lineage>
</organism>
<dbReference type="EC" id="4.1.1.-"/>
<dbReference type="EMBL" id="AJ250862">
    <property type="protein sequence ID" value="CAB60260.1"/>
    <property type="molecule type" value="Genomic_DNA"/>
</dbReference>
<dbReference type="PDB" id="1P3Y">
    <property type="method" value="X-ray"/>
    <property type="resolution" value="2.54 A"/>
    <property type="chains" value="1=1-194"/>
</dbReference>
<dbReference type="PDBsum" id="1P3Y"/>
<dbReference type="SMR" id="Q9RC23"/>
<dbReference type="DrugBank" id="DB03147">
    <property type="generic name" value="Flavin adenine dinucleotide"/>
</dbReference>
<dbReference type="UniPathway" id="UPA00166"/>
<dbReference type="EvolutionaryTrace" id="Q9RC23"/>
<dbReference type="GO" id="GO:0071513">
    <property type="term" value="C:phosphopantothenoylcysteine decarboxylase complex"/>
    <property type="evidence" value="ECO:0007669"/>
    <property type="project" value="TreeGrafter"/>
</dbReference>
<dbReference type="GO" id="GO:0010181">
    <property type="term" value="F:FMN binding"/>
    <property type="evidence" value="ECO:0007669"/>
    <property type="project" value="TreeGrafter"/>
</dbReference>
<dbReference type="GO" id="GO:0016491">
    <property type="term" value="F:oxidoreductase activity"/>
    <property type="evidence" value="ECO:0000314"/>
    <property type="project" value="UniProtKB"/>
</dbReference>
<dbReference type="GO" id="GO:0004633">
    <property type="term" value="F:phosphopantothenoylcysteine decarboxylase activity"/>
    <property type="evidence" value="ECO:0007669"/>
    <property type="project" value="TreeGrafter"/>
</dbReference>
<dbReference type="GO" id="GO:0017000">
    <property type="term" value="P:antibiotic biosynthetic process"/>
    <property type="evidence" value="ECO:0000314"/>
    <property type="project" value="UniProtKB"/>
</dbReference>
<dbReference type="GO" id="GO:0015937">
    <property type="term" value="P:coenzyme A biosynthetic process"/>
    <property type="evidence" value="ECO:0007669"/>
    <property type="project" value="TreeGrafter"/>
</dbReference>
<dbReference type="Gene3D" id="3.40.50.1950">
    <property type="entry name" value="Flavin prenyltransferase-like"/>
    <property type="match status" value="1"/>
</dbReference>
<dbReference type="InterPro" id="IPR036551">
    <property type="entry name" value="Flavin_trans-like"/>
</dbReference>
<dbReference type="InterPro" id="IPR003382">
    <property type="entry name" value="Flavoprotein"/>
</dbReference>
<dbReference type="PANTHER" id="PTHR14359">
    <property type="entry name" value="HOMO-OLIGOMERIC FLAVIN CONTAINING CYS DECARBOXYLASE FAMILY"/>
    <property type="match status" value="1"/>
</dbReference>
<dbReference type="PANTHER" id="PTHR14359:SF6">
    <property type="entry name" value="PHOSPHOPANTOTHENOYLCYSTEINE DECARBOXYLASE"/>
    <property type="match status" value="1"/>
</dbReference>
<dbReference type="Pfam" id="PF02441">
    <property type="entry name" value="Flavoprotein"/>
    <property type="match status" value="1"/>
</dbReference>
<dbReference type="SUPFAM" id="SSF52507">
    <property type="entry name" value="Homo-oligomeric flavin-containing Cys decarboxylases, HFCD"/>
    <property type="match status" value="1"/>
</dbReference>
<reference evidence="4" key="1">
    <citation type="journal article" date="2000" name="Appl. Environ. Microbiol.">
        <title>Biosynthesis of the lantibiotic mersacidin: organization of a type B lantibiotic gene cluster.</title>
        <authorList>
            <person name="Altena K."/>
            <person name="Guder A."/>
            <person name="Cramer C."/>
            <person name="Bierbaum G."/>
        </authorList>
    </citation>
    <scope>NUCLEOTIDE SEQUENCE [GENOMIC DNA]</scope>
</reference>
<reference evidence="3" key="2">
    <citation type="journal article" date="2002" name="J. Bacteriol.">
        <title>The flavoprotein MrsD catalyzes the oxidative decarboxylation reaction involved in formation of the peptidoglycan biosynthesis inhibitor mersacidin.</title>
        <authorList>
            <person name="Majer F."/>
            <person name="Schmid D.G."/>
            <person name="Altena K."/>
            <person name="Bierbaum G."/>
            <person name="Kupke T."/>
        </authorList>
    </citation>
    <scope>FUNCTION</scope>
    <scope>COFACTOR</scope>
    <scope>ACTIVE SITE</scope>
    <scope>MUTAGENESIS OF HIS-75</scope>
</reference>
<reference evidence="3" key="3">
    <citation type="journal article" date="2003" name="Acta Crystallogr. D">
        <title>Structure of MrsD, an FAD-binding protein of the HFCD family.</title>
        <authorList>
            <person name="Blaesse M."/>
            <person name="Kupke T."/>
            <person name="Huber R."/>
            <person name="Steinbacher S."/>
        </authorList>
    </citation>
    <scope>X-RAY CRYSTALLOGRAPHY (2.54 ANGSTROMS)</scope>
</reference>
<sequence>MSISILKDKKLLIGICGSISSVGISSYLLYFKSFFKEIRVVMTKTAEDLIPAHTVSYFCDHVYSEHGENGKRHSHVEIGRWADIYCIIPATANILGQTANGVAMNLVATTVLAHPHNTIFFPNMNDLMWNKTVVSRNIEQLRKDGHIVIEPVEIMAFEIATGTRKPNRGLITPDKALLAIEKGFKERTKHPSLT</sequence>
<proteinExistence type="evidence at protein level"/>
<name>MRSD_BACSY</name>
<evidence type="ECO:0000269" key="1">
    <source>
    </source>
</evidence>
<evidence type="ECO:0000269" key="2">
    <source>
    </source>
</evidence>
<evidence type="ECO:0000305" key="3"/>
<evidence type="ECO:0000312" key="4">
    <source>
        <dbReference type="EMBL" id="CAB60260.1"/>
    </source>
</evidence>
<evidence type="ECO:0007829" key="5">
    <source>
        <dbReference type="PDB" id="1P3Y"/>
    </source>
</evidence>
<protein>
    <recommendedName>
        <fullName>Mersacidin decarboxylase</fullName>
        <ecNumber>4.1.1.-</ecNumber>
    </recommendedName>
    <alternativeName>
        <fullName>Mersacidin-modifying enzyme MrsD</fullName>
    </alternativeName>
</protein>
<gene>
    <name type="primary">mrsD</name>
</gene>
<feature type="chain" id="PRO_0000182035" description="Mersacidin decarboxylase">
    <location>
        <begin position="1"/>
        <end position="194"/>
    </location>
</feature>
<feature type="active site" evidence="1">
    <location>
        <position position="75"/>
    </location>
</feature>
<feature type="mutagenesis site" description="Abolishes enzyme activity." evidence="1">
    <original>H</original>
    <variation>N</variation>
    <location>
        <position position="75"/>
    </location>
</feature>
<feature type="helix" evidence="5">
    <location>
        <begin position="6"/>
        <end position="8"/>
    </location>
</feature>
<feature type="strand" evidence="5">
    <location>
        <begin position="10"/>
        <end position="15"/>
    </location>
</feature>
<feature type="helix" evidence="5">
    <location>
        <begin position="19"/>
        <end position="23"/>
    </location>
</feature>
<feature type="helix" evidence="5">
    <location>
        <begin position="25"/>
        <end position="31"/>
    </location>
</feature>
<feature type="turn" evidence="5">
    <location>
        <begin position="32"/>
        <end position="34"/>
    </location>
</feature>
<feature type="strand" evidence="5">
    <location>
        <begin position="35"/>
        <end position="42"/>
    </location>
</feature>
<feature type="helix" evidence="5">
    <location>
        <begin position="44"/>
        <end position="49"/>
    </location>
</feature>
<feature type="helix" evidence="5">
    <location>
        <begin position="52"/>
        <end position="55"/>
    </location>
</feature>
<feature type="helix" evidence="5">
    <location>
        <begin position="56"/>
        <end position="58"/>
    </location>
</feature>
<feature type="strand" evidence="5">
    <location>
        <begin position="59"/>
        <end position="63"/>
    </location>
</feature>
<feature type="strand" evidence="5">
    <location>
        <begin position="68"/>
        <end position="70"/>
    </location>
</feature>
<feature type="helix" evidence="5">
    <location>
        <begin position="75"/>
        <end position="81"/>
    </location>
</feature>
<feature type="strand" evidence="5">
    <location>
        <begin position="83"/>
        <end position="90"/>
    </location>
</feature>
<feature type="helix" evidence="5">
    <location>
        <begin position="92"/>
        <end position="99"/>
    </location>
</feature>
<feature type="helix" evidence="5">
    <location>
        <begin position="106"/>
        <end position="113"/>
    </location>
</feature>
<feature type="strand" evidence="5">
    <location>
        <begin position="114"/>
        <end position="116"/>
    </location>
</feature>
<feature type="strand" evidence="5">
    <location>
        <begin position="119"/>
        <end position="122"/>
    </location>
</feature>
<feature type="helix" evidence="5">
    <location>
        <begin position="126"/>
        <end position="129"/>
    </location>
</feature>
<feature type="helix" evidence="5">
    <location>
        <begin position="132"/>
        <end position="144"/>
    </location>
</feature>
<feature type="helix" evidence="5">
    <location>
        <begin position="173"/>
        <end position="183"/>
    </location>
</feature>